<reference key="1">
    <citation type="journal article" date="2007" name="Genome Res.">
        <title>Genome characteristics of facultatively symbiotic Frankia sp. strains reflect host range and host plant biogeography.</title>
        <authorList>
            <person name="Normand P."/>
            <person name="Lapierre P."/>
            <person name="Tisa L.S."/>
            <person name="Gogarten J.P."/>
            <person name="Alloisio N."/>
            <person name="Bagnarol E."/>
            <person name="Bassi C.A."/>
            <person name="Berry A.M."/>
            <person name="Bickhart D.M."/>
            <person name="Choisne N."/>
            <person name="Couloux A."/>
            <person name="Cournoyer B."/>
            <person name="Cruveiller S."/>
            <person name="Daubin V."/>
            <person name="Demange N."/>
            <person name="Francino M.P."/>
            <person name="Goltsman E."/>
            <person name="Huang Y."/>
            <person name="Kopp O.R."/>
            <person name="Labarre L."/>
            <person name="Lapidus A."/>
            <person name="Lavire C."/>
            <person name="Marechal J."/>
            <person name="Martinez M."/>
            <person name="Mastronunzio J.E."/>
            <person name="Mullin B.C."/>
            <person name="Niemann J."/>
            <person name="Pujic P."/>
            <person name="Rawnsley T."/>
            <person name="Rouy Z."/>
            <person name="Schenowitz C."/>
            <person name="Sellstedt A."/>
            <person name="Tavares F."/>
            <person name="Tomkins J.P."/>
            <person name="Vallenet D."/>
            <person name="Valverde C."/>
            <person name="Wall L.G."/>
            <person name="Wang Y."/>
            <person name="Medigue C."/>
            <person name="Benson D.R."/>
        </authorList>
    </citation>
    <scope>NUCLEOTIDE SEQUENCE [LARGE SCALE GENOMIC DNA]</scope>
    <source>
        <strain>DSM 45818 / CECT 9043 / HFP020203 / CcI3</strain>
    </source>
</reference>
<comment type="function">
    <text evidence="1">ATP-dependent carboxylate-amine ligase which exhibits weak glutamate--cysteine ligase activity.</text>
</comment>
<comment type="catalytic activity">
    <reaction evidence="1">
        <text>L-cysteine + L-glutamate + ATP = gamma-L-glutamyl-L-cysteine + ADP + phosphate + H(+)</text>
        <dbReference type="Rhea" id="RHEA:13285"/>
        <dbReference type="ChEBI" id="CHEBI:15378"/>
        <dbReference type="ChEBI" id="CHEBI:29985"/>
        <dbReference type="ChEBI" id="CHEBI:30616"/>
        <dbReference type="ChEBI" id="CHEBI:35235"/>
        <dbReference type="ChEBI" id="CHEBI:43474"/>
        <dbReference type="ChEBI" id="CHEBI:58173"/>
        <dbReference type="ChEBI" id="CHEBI:456216"/>
        <dbReference type="EC" id="6.3.2.2"/>
    </reaction>
</comment>
<comment type="similarity">
    <text evidence="1">Belongs to the glutamate--cysteine ligase type 2 family. YbdK subfamily.</text>
</comment>
<keyword id="KW-0067">ATP-binding</keyword>
<keyword id="KW-0436">Ligase</keyword>
<keyword id="KW-0547">Nucleotide-binding</keyword>
<keyword id="KW-1185">Reference proteome</keyword>
<organism>
    <name type="scientific">Frankia casuarinae (strain DSM 45818 / CECT 9043 / HFP020203 / CcI3)</name>
    <dbReference type="NCBI Taxonomy" id="106370"/>
    <lineage>
        <taxon>Bacteria</taxon>
        <taxon>Bacillati</taxon>
        <taxon>Actinomycetota</taxon>
        <taxon>Actinomycetes</taxon>
        <taxon>Frankiales</taxon>
        <taxon>Frankiaceae</taxon>
        <taxon>Frankia</taxon>
    </lineage>
</organism>
<accession>Q2JF65</accession>
<proteinExistence type="inferred from homology"/>
<name>GCS21_FRACC</name>
<sequence>MQIPFSSSSSTSLGIEWELQLVDQQSRELRGEASGILHELRAKVGECEAAKAKHELFESTIEVITGVCDSVEEATADLSGTVSLLRDLAERRGIGLMCSGTHPASDYMGQRITEDHRYFRLVSQMQWLARRLLIFGVHVHVGVRSADKAMPIVNALMAYVPHFLALSASSPYWLGGDTGLASSRSQVFASLPTAGLPYPLEDWPGFESFMETLIVSGTIETIREVWWDIRPHPNFGTVELRVCDGLPSLMEVGAVAALAQCLVDRMNTQIDRGYRLPTPQRWLVQENKWRAARYGLDAQIIVDGRGGIRPVRDDITDLVEDLLPVAHRLGCSSELSDTLTILRTGASYIRQRDAARRAGGDLTRVVDTLLEEMNTGRPVVDG</sequence>
<evidence type="ECO:0000255" key="1">
    <source>
        <dbReference type="HAMAP-Rule" id="MF_01609"/>
    </source>
</evidence>
<feature type="chain" id="PRO_0000255802" description="Putative glutamate--cysteine ligase 2-1">
    <location>
        <begin position="1"/>
        <end position="382"/>
    </location>
</feature>
<protein>
    <recommendedName>
        <fullName evidence="1">Putative glutamate--cysteine ligase 2-1</fullName>
        <ecNumber evidence="1">6.3.2.2</ecNumber>
    </recommendedName>
    <alternativeName>
        <fullName evidence="1">Gamma-glutamylcysteine synthetase 2-1</fullName>
        <shortName evidence="1">GCS 2-1</shortName>
        <shortName evidence="1">Gamma-GCS 2-1</shortName>
    </alternativeName>
</protein>
<gene>
    <name type="ordered locus">Francci3_0693</name>
</gene>
<dbReference type="EC" id="6.3.2.2" evidence="1"/>
<dbReference type="EMBL" id="CP000249">
    <property type="protein sequence ID" value="ABD10077.1"/>
    <property type="molecule type" value="Genomic_DNA"/>
</dbReference>
<dbReference type="RefSeq" id="WP_011435146.1">
    <property type="nucleotide sequence ID" value="NZ_JENI01000002.1"/>
</dbReference>
<dbReference type="SMR" id="Q2JF65"/>
<dbReference type="STRING" id="106370.Francci3_0693"/>
<dbReference type="KEGG" id="fra:Francci3_0693"/>
<dbReference type="eggNOG" id="COG2170">
    <property type="taxonomic scope" value="Bacteria"/>
</dbReference>
<dbReference type="HOGENOM" id="CLU_044848_1_0_11"/>
<dbReference type="OrthoDB" id="9769628at2"/>
<dbReference type="PhylomeDB" id="Q2JF65"/>
<dbReference type="Proteomes" id="UP000001937">
    <property type="component" value="Chromosome"/>
</dbReference>
<dbReference type="GO" id="GO:0005524">
    <property type="term" value="F:ATP binding"/>
    <property type="evidence" value="ECO:0007669"/>
    <property type="project" value="UniProtKB-KW"/>
</dbReference>
<dbReference type="GO" id="GO:0004357">
    <property type="term" value="F:glutamate-cysteine ligase activity"/>
    <property type="evidence" value="ECO:0007669"/>
    <property type="project" value="UniProtKB-EC"/>
</dbReference>
<dbReference type="GO" id="GO:0042398">
    <property type="term" value="P:modified amino acid biosynthetic process"/>
    <property type="evidence" value="ECO:0007669"/>
    <property type="project" value="InterPro"/>
</dbReference>
<dbReference type="Gene3D" id="3.30.590.20">
    <property type="match status" value="1"/>
</dbReference>
<dbReference type="HAMAP" id="MF_01609">
    <property type="entry name" value="Glu_cys_ligase_2"/>
    <property type="match status" value="1"/>
</dbReference>
<dbReference type="InterPro" id="IPR050141">
    <property type="entry name" value="GCL_type2/YbdK_subfam"/>
</dbReference>
<dbReference type="InterPro" id="IPR006336">
    <property type="entry name" value="GCS2"/>
</dbReference>
<dbReference type="InterPro" id="IPR014746">
    <property type="entry name" value="Gln_synth/guanido_kin_cat_dom"/>
</dbReference>
<dbReference type="InterPro" id="IPR011793">
    <property type="entry name" value="YbdK"/>
</dbReference>
<dbReference type="NCBIfam" id="TIGR02050">
    <property type="entry name" value="gshA_cyan_rel"/>
    <property type="match status" value="1"/>
</dbReference>
<dbReference type="NCBIfam" id="NF010042">
    <property type="entry name" value="PRK13517.1-2"/>
    <property type="match status" value="1"/>
</dbReference>
<dbReference type="NCBIfam" id="NF010043">
    <property type="entry name" value="PRK13517.1-3"/>
    <property type="match status" value="1"/>
</dbReference>
<dbReference type="NCBIfam" id="NF010044">
    <property type="entry name" value="PRK13517.1-4"/>
    <property type="match status" value="1"/>
</dbReference>
<dbReference type="PANTHER" id="PTHR36510">
    <property type="entry name" value="GLUTAMATE--CYSTEINE LIGASE 2-RELATED"/>
    <property type="match status" value="1"/>
</dbReference>
<dbReference type="PANTHER" id="PTHR36510:SF1">
    <property type="entry name" value="GLUTAMATE--CYSTEINE LIGASE 2-RELATED"/>
    <property type="match status" value="1"/>
</dbReference>
<dbReference type="Pfam" id="PF04107">
    <property type="entry name" value="GCS2"/>
    <property type="match status" value="1"/>
</dbReference>
<dbReference type="SUPFAM" id="SSF55931">
    <property type="entry name" value="Glutamine synthetase/guanido kinase"/>
    <property type="match status" value="1"/>
</dbReference>